<dbReference type="EC" id="2.7.1.148" evidence="1"/>
<dbReference type="EMBL" id="AE017196">
    <property type="protein sequence ID" value="AAS14089.1"/>
    <property type="molecule type" value="Genomic_DNA"/>
</dbReference>
<dbReference type="RefSeq" id="WP_010082535.1">
    <property type="nucleotide sequence ID" value="NZ_OX384529.1"/>
</dbReference>
<dbReference type="SMR" id="Q73I23"/>
<dbReference type="EnsemblBacteria" id="AAS14089">
    <property type="protein sequence ID" value="AAS14089"/>
    <property type="gene ID" value="WD_0360"/>
</dbReference>
<dbReference type="KEGG" id="wol:WD_0360"/>
<dbReference type="eggNOG" id="COG1947">
    <property type="taxonomic scope" value="Bacteria"/>
</dbReference>
<dbReference type="UniPathway" id="UPA00056">
    <property type="reaction ID" value="UER00094"/>
</dbReference>
<dbReference type="Proteomes" id="UP000008215">
    <property type="component" value="Chromosome"/>
</dbReference>
<dbReference type="GO" id="GO:0050515">
    <property type="term" value="F:4-(cytidine 5'-diphospho)-2-C-methyl-D-erythritol kinase activity"/>
    <property type="evidence" value="ECO:0007669"/>
    <property type="project" value="UniProtKB-UniRule"/>
</dbReference>
<dbReference type="GO" id="GO:0005524">
    <property type="term" value="F:ATP binding"/>
    <property type="evidence" value="ECO:0007669"/>
    <property type="project" value="UniProtKB-UniRule"/>
</dbReference>
<dbReference type="GO" id="GO:0019288">
    <property type="term" value="P:isopentenyl diphosphate biosynthetic process, methylerythritol 4-phosphate pathway"/>
    <property type="evidence" value="ECO:0007669"/>
    <property type="project" value="UniProtKB-UniRule"/>
</dbReference>
<dbReference type="GO" id="GO:0016114">
    <property type="term" value="P:terpenoid biosynthetic process"/>
    <property type="evidence" value="ECO:0007669"/>
    <property type="project" value="InterPro"/>
</dbReference>
<dbReference type="Gene3D" id="3.30.230.10">
    <property type="match status" value="1"/>
</dbReference>
<dbReference type="Gene3D" id="3.30.70.890">
    <property type="entry name" value="GHMP kinase, C-terminal domain"/>
    <property type="match status" value="1"/>
</dbReference>
<dbReference type="HAMAP" id="MF_00061">
    <property type="entry name" value="IspE"/>
    <property type="match status" value="1"/>
</dbReference>
<dbReference type="InterPro" id="IPR013750">
    <property type="entry name" value="GHMP_kinase_C_dom"/>
</dbReference>
<dbReference type="InterPro" id="IPR036554">
    <property type="entry name" value="GHMP_kinase_C_sf"/>
</dbReference>
<dbReference type="InterPro" id="IPR006204">
    <property type="entry name" value="GHMP_kinase_N_dom"/>
</dbReference>
<dbReference type="InterPro" id="IPR004424">
    <property type="entry name" value="IspE"/>
</dbReference>
<dbReference type="InterPro" id="IPR020568">
    <property type="entry name" value="Ribosomal_Su5_D2-typ_SF"/>
</dbReference>
<dbReference type="InterPro" id="IPR014721">
    <property type="entry name" value="Ribsml_uS5_D2-typ_fold_subgr"/>
</dbReference>
<dbReference type="NCBIfam" id="TIGR00154">
    <property type="entry name" value="ispE"/>
    <property type="match status" value="1"/>
</dbReference>
<dbReference type="NCBIfam" id="NF011202">
    <property type="entry name" value="PRK14608.1"/>
    <property type="match status" value="1"/>
</dbReference>
<dbReference type="PANTHER" id="PTHR43527">
    <property type="entry name" value="4-DIPHOSPHOCYTIDYL-2-C-METHYL-D-ERYTHRITOL KINASE, CHLOROPLASTIC"/>
    <property type="match status" value="1"/>
</dbReference>
<dbReference type="PANTHER" id="PTHR43527:SF2">
    <property type="entry name" value="4-DIPHOSPHOCYTIDYL-2-C-METHYL-D-ERYTHRITOL KINASE, CHLOROPLASTIC"/>
    <property type="match status" value="1"/>
</dbReference>
<dbReference type="Pfam" id="PF08544">
    <property type="entry name" value="GHMP_kinases_C"/>
    <property type="match status" value="1"/>
</dbReference>
<dbReference type="Pfam" id="PF00288">
    <property type="entry name" value="GHMP_kinases_N"/>
    <property type="match status" value="1"/>
</dbReference>
<dbReference type="PIRSF" id="PIRSF010376">
    <property type="entry name" value="IspE"/>
    <property type="match status" value="1"/>
</dbReference>
<dbReference type="SUPFAM" id="SSF55060">
    <property type="entry name" value="GHMP Kinase, C-terminal domain"/>
    <property type="match status" value="1"/>
</dbReference>
<dbReference type="SUPFAM" id="SSF54211">
    <property type="entry name" value="Ribosomal protein S5 domain 2-like"/>
    <property type="match status" value="1"/>
</dbReference>
<feature type="chain" id="PRO_0000189290" description="4-diphosphocytidyl-2-C-methyl-D-erythritol kinase">
    <location>
        <begin position="1"/>
        <end position="288"/>
    </location>
</feature>
<feature type="active site" evidence="1">
    <location>
        <position position="11"/>
    </location>
</feature>
<feature type="active site" evidence="1">
    <location>
        <position position="140"/>
    </location>
</feature>
<feature type="binding site" evidence="1">
    <location>
        <begin position="100"/>
        <end position="110"/>
    </location>
    <ligand>
        <name>ATP</name>
        <dbReference type="ChEBI" id="CHEBI:30616"/>
    </ligand>
</feature>
<organism>
    <name type="scientific">Wolbachia pipientis wMel</name>
    <dbReference type="NCBI Taxonomy" id="163164"/>
    <lineage>
        <taxon>Bacteria</taxon>
        <taxon>Pseudomonadati</taxon>
        <taxon>Pseudomonadota</taxon>
        <taxon>Alphaproteobacteria</taxon>
        <taxon>Rickettsiales</taxon>
        <taxon>Anaplasmataceae</taxon>
        <taxon>Wolbachieae</taxon>
        <taxon>Wolbachia</taxon>
    </lineage>
</organism>
<gene>
    <name evidence="1" type="primary">ispE</name>
    <name type="ordered locus">WD_0360</name>
</gene>
<comment type="function">
    <text evidence="1">Catalyzes the phosphorylation of the position 2 hydroxy group of 4-diphosphocytidyl-2C-methyl-D-erythritol.</text>
</comment>
<comment type="catalytic activity">
    <reaction evidence="1">
        <text>4-CDP-2-C-methyl-D-erythritol + ATP = 4-CDP-2-C-methyl-D-erythritol 2-phosphate + ADP + H(+)</text>
        <dbReference type="Rhea" id="RHEA:18437"/>
        <dbReference type="ChEBI" id="CHEBI:15378"/>
        <dbReference type="ChEBI" id="CHEBI:30616"/>
        <dbReference type="ChEBI" id="CHEBI:57823"/>
        <dbReference type="ChEBI" id="CHEBI:57919"/>
        <dbReference type="ChEBI" id="CHEBI:456216"/>
        <dbReference type="EC" id="2.7.1.148"/>
    </reaction>
</comment>
<comment type="pathway">
    <text evidence="1">Isoprenoid biosynthesis; isopentenyl diphosphate biosynthesis via DXP pathway; isopentenyl diphosphate from 1-deoxy-D-xylulose 5-phosphate: step 3/6.</text>
</comment>
<comment type="similarity">
    <text evidence="1">Belongs to the GHMP kinase family. IspE subfamily.</text>
</comment>
<name>ISPE_WOLPM</name>
<accession>Q73I23</accession>
<protein>
    <recommendedName>
        <fullName evidence="1">4-diphosphocytidyl-2-C-methyl-D-erythritol kinase</fullName>
        <shortName evidence="1">CMK</shortName>
        <ecNumber evidence="1">2.7.1.148</ecNumber>
    </recommendedName>
    <alternativeName>
        <fullName evidence="1">4-(cytidine-5'-diphospho)-2-C-methyl-D-erythritol kinase</fullName>
    </alternativeName>
</protein>
<proteinExistence type="inferred from homology"/>
<keyword id="KW-0067">ATP-binding</keyword>
<keyword id="KW-0414">Isoprene biosynthesis</keyword>
<keyword id="KW-0418">Kinase</keyword>
<keyword id="KW-0547">Nucleotide-binding</keyword>
<keyword id="KW-0808">Transferase</keyword>
<sequence>MKSFCVKAPAKINLFLHVVDKKETGYHLIEGLFVFANLSNFLEIKVGEKDSRYDNSTVEFINSESKINNQYNTVMKAVNLLLRHAPVRTKVTVKVVKNIPIAAGLGSGSSDAGAVVRTLGKLWEIDRTILNEIALNVGADVPASVDSKPVFVRGIGEELCHIKKFSLPTNVVLVKPKKRFLSTPEVFSKHEGKFSEPIKWSDDAEKDLLKFLKETRNDLQEIAISFVPEIKDVISTLKSQEGSILSRMSGSGVSCFGIFDSEENAKAAAVNIGKKQPEWWVCNTQLIV</sequence>
<evidence type="ECO:0000255" key="1">
    <source>
        <dbReference type="HAMAP-Rule" id="MF_00061"/>
    </source>
</evidence>
<reference key="1">
    <citation type="journal article" date="2004" name="PLoS Biol.">
        <title>Phylogenomics of the reproductive parasite Wolbachia pipientis wMel: a streamlined genome overrun by mobile genetic elements.</title>
        <authorList>
            <person name="Wu M."/>
            <person name="Sun L.V."/>
            <person name="Vamathevan J.J."/>
            <person name="Riegler M."/>
            <person name="DeBoy R.T."/>
            <person name="Brownlie J.C."/>
            <person name="McGraw E.A."/>
            <person name="Martin W."/>
            <person name="Esser C."/>
            <person name="Ahmadinejad N."/>
            <person name="Wiegand C."/>
            <person name="Madupu R."/>
            <person name="Beanan M.J."/>
            <person name="Brinkac L.M."/>
            <person name="Daugherty S.C."/>
            <person name="Durkin A.S."/>
            <person name="Kolonay J.F."/>
            <person name="Nelson W.C."/>
            <person name="Mohamoud Y."/>
            <person name="Lee P."/>
            <person name="Berry K.J."/>
            <person name="Young M.B."/>
            <person name="Utterback T.R."/>
            <person name="Weidman J.F."/>
            <person name="Nierman W.C."/>
            <person name="Paulsen I.T."/>
            <person name="Nelson K.E."/>
            <person name="Tettelin H."/>
            <person name="O'Neill S.L."/>
            <person name="Eisen J.A."/>
        </authorList>
    </citation>
    <scope>NUCLEOTIDE SEQUENCE [LARGE SCALE GENOMIC DNA]</scope>
</reference>